<proteinExistence type="evidence at transcript level"/>
<sequence>MRFRHKAAALAATLALPLAGLVGLASPAQAATSATATFAKTSDWGTGFGGSWTVKNTGTTSLSSWTVEWDFPTGTKVTSAWDATVTNSGDHWTAKNVGWNGTLAPGASVSFGFNGSGPGSPSNCKLNGGSCDGTSVPGDAAPSAPGTPTASNITDTSVKLSWSAATDDKGVKNYDVLRDGAKVATVTGTTYTDNGLTKGTAYSYSVKARDTADQTGPASGAVKVTTTGGGDGGNPGTGAEVKMGYFTNWGVYGRNYHVKNLVTSGSADKITHINYAFGNVQGGKCTIGDSYADYDKAYTADQSVDGVADTWDQPLRGNFNQLRKLKAKYPNIKILYSFGGWTWSGGFPDAVKNPAAFAKSCHDLVEDPRWADVFDGIDLDWEYPNACGLSCDETSAPNAFSSMMKAMRAEFGQDYLITAAVTADGSDGGKIDAADYGEASKYIDWYNVMTYDFFGAWAKNGPTAPHSPLTAYDGIPQQGFNTADAMAKFKSKGVPADKLLIGIGFYGRGWTGVTQSAPGGTATGPATGTYEAGIEDYKVLKNSCPATGTIAGTAYAHCGSNWWSYDTPATIKSKMDWAEQQGLGGAFFWEFSGDTANGDWWRHRQRPQVTPAVRTTRRH</sequence>
<dbReference type="EC" id="3.2.1.14"/>
<dbReference type="EMBL" id="D12647">
    <property type="protein sequence ID" value="BAA02168.1"/>
    <property type="molecule type" value="Genomic_DNA"/>
</dbReference>
<dbReference type="BMRB" id="P36909"/>
<dbReference type="SMR" id="P36909"/>
<dbReference type="CAZy" id="CBM2">
    <property type="family name" value="Carbohydrate-Binding Module Family 2"/>
</dbReference>
<dbReference type="CAZy" id="GH18">
    <property type="family name" value="Glycoside Hydrolase Family 18"/>
</dbReference>
<dbReference type="GO" id="GO:0008061">
    <property type="term" value="F:chitin binding"/>
    <property type="evidence" value="ECO:0007669"/>
    <property type="project" value="UniProtKB-KW"/>
</dbReference>
<dbReference type="GO" id="GO:0008843">
    <property type="term" value="F:endochitinase activity"/>
    <property type="evidence" value="ECO:0007669"/>
    <property type="project" value="UniProtKB-EC"/>
</dbReference>
<dbReference type="GO" id="GO:0030247">
    <property type="term" value="F:polysaccharide binding"/>
    <property type="evidence" value="ECO:0007669"/>
    <property type="project" value="InterPro"/>
</dbReference>
<dbReference type="GO" id="GO:0006032">
    <property type="term" value="P:chitin catabolic process"/>
    <property type="evidence" value="ECO:0007669"/>
    <property type="project" value="UniProtKB-KW"/>
</dbReference>
<dbReference type="GO" id="GO:0000272">
    <property type="term" value="P:polysaccharide catabolic process"/>
    <property type="evidence" value="ECO:0007669"/>
    <property type="project" value="UniProtKB-KW"/>
</dbReference>
<dbReference type="CDD" id="cd00063">
    <property type="entry name" value="FN3"/>
    <property type="match status" value="1"/>
</dbReference>
<dbReference type="CDD" id="cd06548">
    <property type="entry name" value="GH18_chitinase"/>
    <property type="match status" value="1"/>
</dbReference>
<dbReference type="Gene3D" id="2.60.40.290">
    <property type="match status" value="1"/>
</dbReference>
<dbReference type="Gene3D" id="3.10.50.10">
    <property type="match status" value="1"/>
</dbReference>
<dbReference type="Gene3D" id="3.20.20.80">
    <property type="entry name" value="Glycosidases"/>
    <property type="match status" value="1"/>
</dbReference>
<dbReference type="Gene3D" id="2.60.40.10">
    <property type="entry name" value="Immunoglobulins"/>
    <property type="match status" value="1"/>
</dbReference>
<dbReference type="InterPro" id="IPR001919">
    <property type="entry name" value="CBD2"/>
</dbReference>
<dbReference type="InterPro" id="IPR008965">
    <property type="entry name" value="CBM2/CBM3_carb-bd_dom_sf"/>
</dbReference>
<dbReference type="InterPro" id="IPR012291">
    <property type="entry name" value="CBM2_carb-bd_dom_sf"/>
</dbReference>
<dbReference type="InterPro" id="IPR018366">
    <property type="entry name" value="CBM2_CS"/>
</dbReference>
<dbReference type="InterPro" id="IPR011583">
    <property type="entry name" value="Chitinase_II/V-like_cat"/>
</dbReference>
<dbReference type="InterPro" id="IPR029070">
    <property type="entry name" value="Chitinase_insertion_sf"/>
</dbReference>
<dbReference type="InterPro" id="IPR003961">
    <property type="entry name" value="FN3_dom"/>
</dbReference>
<dbReference type="InterPro" id="IPR036116">
    <property type="entry name" value="FN3_sf"/>
</dbReference>
<dbReference type="InterPro" id="IPR001223">
    <property type="entry name" value="Glyco_hydro18_cat"/>
</dbReference>
<dbReference type="InterPro" id="IPR001579">
    <property type="entry name" value="Glyco_hydro_18_chit_AS"/>
</dbReference>
<dbReference type="InterPro" id="IPR017853">
    <property type="entry name" value="Glycoside_hydrolase_SF"/>
</dbReference>
<dbReference type="InterPro" id="IPR050314">
    <property type="entry name" value="Glycosyl_Hydrlase_18"/>
</dbReference>
<dbReference type="InterPro" id="IPR013783">
    <property type="entry name" value="Ig-like_fold"/>
</dbReference>
<dbReference type="PANTHER" id="PTHR11177">
    <property type="entry name" value="CHITINASE"/>
    <property type="match status" value="1"/>
</dbReference>
<dbReference type="PANTHER" id="PTHR11177:SF317">
    <property type="entry name" value="CHITINASE 12-RELATED"/>
    <property type="match status" value="1"/>
</dbReference>
<dbReference type="Pfam" id="PF00553">
    <property type="entry name" value="CBM_2"/>
    <property type="match status" value="1"/>
</dbReference>
<dbReference type="Pfam" id="PF00041">
    <property type="entry name" value="fn3"/>
    <property type="match status" value="1"/>
</dbReference>
<dbReference type="Pfam" id="PF00704">
    <property type="entry name" value="Glyco_hydro_18"/>
    <property type="match status" value="1"/>
</dbReference>
<dbReference type="SMART" id="SM00637">
    <property type="entry name" value="CBD_II"/>
    <property type="match status" value="1"/>
</dbReference>
<dbReference type="SMART" id="SM00060">
    <property type="entry name" value="FN3"/>
    <property type="match status" value="1"/>
</dbReference>
<dbReference type="SMART" id="SM00636">
    <property type="entry name" value="Glyco_18"/>
    <property type="match status" value="1"/>
</dbReference>
<dbReference type="SUPFAM" id="SSF51445">
    <property type="entry name" value="(Trans)glycosidases"/>
    <property type="match status" value="1"/>
</dbReference>
<dbReference type="SUPFAM" id="SSF49384">
    <property type="entry name" value="Carbohydrate-binding domain"/>
    <property type="match status" value="1"/>
</dbReference>
<dbReference type="SUPFAM" id="SSF54556">
    <property type="entry name" value="Chitinase insertion domain"/>
    <property type="match status" value="1"/>
</dbReference>
<dbReference type="SUPFAM" id="SSF49265">
    <property type="entry name" value="Fibronectin type III"/>
    <property type="match status" value="1"/>
</dbReference>
<dbReference type="PROSITE" id="PS51173">
    <property type="entry name" value="CBM2"/>
    <property type="match status" value="1"/>
</dbReference>
<dbReference type="PROSITE" id="PS00561">
    <property type="entry name" value="CBM2_A"/>
    <property type="match status" value="1"/>
</dbReference>
<dbReference type="PROSITE" id="PS00018">
    <property type="entry name" value="EF_HAND_1"/>
    <property type="match status" value="1"/>
</dbReference>
<dbReference type="PROSITE" id="PS50853">
    <property type="entry name" value="FN3"/>
    <property type="match status" value="1"/>
</dbReference>
<dbReference type="PROSITE" id="PS01095">
    <property type="entry name" value="GH18_1"/>
    <property type="match status" value="1"/>
</dbReference>
<dbReference type="PROSITE" id="PS51910">
    <property type="entry name" value="GH18_2"/>
    <property type="match status" value="1"/>
</dbReference>
<feature type="signal peptide" evidence="1">
    <location>
        <begin position="1"/>
        <end position="30"/>
    </location>
</feature>
<feature type="chain" id="PRO_0000011911" description="Chitinase C">
    <location>
        <begin position="31"/>
        <end position="619"/>
    </location>
</feature>
<feature type="domain" description="CBM2" evidence="3">
    <location>
        <begin position="31"/>
        <end position="134"/>
    </location>
</feature>
<feature type="domain" description="Fibronectin type-III" evidence="2">
    <location>
        <begin position="144"/>
        <end position="229"/>
    </location>
</feature>
<feature type="domain" description="GH18" evidence="4">
    <location>
        <begin position="240"/>
        <end position="619"/>
    </location>
</feature>
<feature type="region of interest" description="Disordered" evidence="5">
    <location>
        <begin position="212"/>
        <end position="236"/>
    </location>
</feature>
<feature type="compositionally biased region" description="Gly residues" evidence="5">
    <location>
        <begin position="227"/>
        <end position="236"/>
    </location>
</feature>
<feature type="active site" description="Proton donor" evidence="4">
    <location>
        <position position="382"/>
    </location>
</feature>
<feature type="binding site" evidence="4">
    <location>
        <begin position="312"/>
        <end position="313"/>
    </location>
    <ligand>
        <name>chitin</name>
        <dbReference type="ChEBI" id="CHEBI:17029"/>
    </ligand>
</feature>
<feature type="binding site" evidence="4">
    <location>
        <begin position="339"/>
        <end position="342"/>
    </location>
    <ligand>
        <name>chitin</name>
        <dbReference type="ChEBI" id="CHEBI:17029"/>
    </ligand>
</feature>
<feature type="binding site" evidence="4">
    <location>
        <position position="383"/>
    </location>
    <ligand>
        <name>chitin</name>
        <dbReference type="ChEBI" id="CHEBI:17029"/>
    </ligand>
</feature>
<feature type="binding site" evidence="4">
    <location>
        <begin position="449"/>
        <end position="452"/>
    </location>
    <ligand>
        <name>chitin</name>
        <dbReference type="ChEBI" id="CHEBI:17029"/>
    </ligand>
</feature>
<feature type="binding site" evidence="4">
    <location>
        <position position="589"/>
    </location>
    <ligand>
        <name>chitin</name>
        <dbReference type="ChEBI" id="CHEBI:17029"/>
    </ligand>
</feature>
<comment type="catalytic activity">
    <reaction>
        <text>Random endo-hydrolysis of N-acetyl-beta-D-glucosaminide (1-&gt;4)-beta-linkages in chitin and chitodextrins.</text>
        <dbReference type="EC" id="3.2.1.14"/>
    </reaction>
</comment>
<comment type="induction">
    <text>By chitin.</text>
</comment>
<comment type="similarity">
    <text evidence="6">Belongs to the glycosyl hydrolase 18 family. Chitinase class II subfamily.</text>
</comment>
<gene>
    <name type="primary">chiC</name>
</gene>
<evidence type="ECO:0000255" key="1"/>
<evidence type="ECO:0000255" key="2">
    <source>
        <dbReference type="PROSITE-ProRule" id="PRU00316"/>
    </source>
</evidence>
<evidence type="ECO:0000255" key="3">
    <source>
        <dbReference type="PROSITE-ProRule" id="PRU01135"/>
    </source>
</evidence>
<evidence type="ECO:0000255" key="4">
    <source>
        <dbReference type="PROSITE-ProRule" id="PRU01258"/>
    </source>
</evidence>
<evidence type="ECO:0000256" key="5">
    <source>
        <dbReference type="SAM" id="MobiDB-lite"/>
    </source>
</evidence>
<evidence type="ECO:0000305" key="6"/>
<protein>
    <recommendedName>
        <fullName>Chitinase C</fullName>
        <ecNumber>3.2.1.14</ecNumber>
    </recommendedName>
</protein>
<reference key="1">
    <citation type="journal article" date="1993" name="J. Gen. Microbiol.">
        <title>Multiple domain structure in a chitinase gene (chiC) of Streptomyces lividans.</title>
        <authorList>
            <person name="Fujii T."/>
            <person name="Miyashita K."/>
        </authorList>
    </citation>
    <scope>NUCLEOTIDE SEQUENCE [GENOMIC DNA]</scope>
</reference>
<accession>P36909</accession>
<keyword id="KW-0119">Carbohydrate metabolism</keyword>
<keyword id="KW-0146">Chitin degradation</keyword>
<keyword id="KW-0147">Chitin-binding</keyword>
<keyword id="KW-0326">Glycosidase</keyword>
<keyword id="KW-0378">Hydrolase</keyword>
<keyword id="KW-0624">Polysaccharide degradation</keyword>
<keyword id="KW-0732">Signal</keyword>
<organism>
    <name type="scientific">Streptomyces lividans</name>
    <dbReference type="NCBI Taxonomy" id="1916"/>
    <lineage>
        <taxon>Bacteria</taxon>
        <taxon>Bacillati</taxon>
        <taxon>Actinomycetota</taxon>
        <taxon>Actinomycetes</taxon>
        <taxon>Kitasatosporales</taxon>
        <taxon>Streptomycetaceae</taxon>
        <taxon>Streptomyces</taxon>
    </lineage>
</organism>
<name>CHIT_STRLI</name>